<feature type="chain" id="PRO_0000066496" description="Yop proteins translocation protein M">
    <location>
        <begin position="1"/>
        <end position="115"/>
    </location>
</feature>
<feature type="region of interest" description="Disordered" evidence="2">
    <location>
        <begin position="19"/>
        <end position="38"/>
    </location>
</feature>
<feature type="compositionally biased region" description="Polar residues" evidence="2">
    <location>
        <begin position="27"/>
        <end position="38"/>
    </location>
</feature>
<sequence length="115" mass="12412">MKINTLQSLINQQITQVGHGGQAGRLTETNPLTENSHQISTAEKAFANEVLEHVKNTALSRHDIACLLPRVSNLELKQGKAGEVIVTGLRTEQLSLSDAKLLLEAAMRQDTAADG</sequence>
<geneLocation type="plasmid">
    <name>pCD1</name>
</geneLocation>
<accession>P69978</accession>
<accession>Q00930</accession>
<accession>Q663H7</accession>
<dbReference type="EMBL" id="AF074612">
    <property type="protein sequence ID" value="AAC69772.1"/>
    <property type="molecule type" value="Genomic_DNA"/>
</dbReference>
<dbReference type="EMBL" id="AF053946">
    <property type="protein sequence ID" value="AAC62586.1"/>
    <property type="molecule type" value="Genomic_DNA"/>
</dbReference>
<dbReference type="EMBL" id="AL117189">
    <property type="protein sequence ID" value="CAB54939.1"/>
    <property type="molecule type" value="Genomic_DNA"/>
</dbReference>
<dbReference type="EMBL" id="AE017043">
    <property type="protein sequence ID" value="AAS58540.1"/>
    <property type="molecule type" value="Genomic_DNA"/>
</dbReference>
<dbReference type="PIR" id="T43563">
    <property type="entry name" value="T43563"/>
</dbReference>
<dbReference type="RefSeq" id="NP_395196.1">
    <property type="nucleotide sequence ID" value="NC_003131.1"/>
</dbReference>
<dbReference type="RefSeq" id="NP_857720.1">
    <property type="nucleotide sequence ID" value="NC_004836.1"/>
</dbReference>
<dbReference type="RefSeq" id="NP_857915.1">
    <property type="nucleotide sequence ID" value="NC_004839.1"/>
</dbReference>
<dbReference type="RefSeq" id="WP_002212907.1">
    <property type="nucleotide sequence ID" value="NZ_WUCM01000070.1"/>
</dbReference>
<dbReference type="SMR" id="P69978"/>
<dbReference type="PaxDb" id="214092-5832482"/>
<dbReference type="DNASU" id="1149279"/>
<dbReference type="EnsemblBacteria" id="AAS58540">
    <property type="protein sequence ID" value="AAS58540"/>
    <property type="gene ID" value="YP_pCD21"/>
</dbReference>
<dbReference type="KEGG" id="ype:YPCD1.62"/>
<dbReference type="KEGG" id="ypm:YP_pCD21"/>
<dbReference type="PATRIC" id="fig|214092.21.peg.72"/>
<dbReference type="eggNOG" id="COG5599">
    <property type="taxonomic scope" value="Bacteria"/>
</dbReference>
<dbReference type="HOGENOM" id="CLU_2235561_0_0_6"/>
<dbReference type="OrthoDB" id="9869044at2"/>
<dbReference type="Proteomes" id="UP000000815">
    <property type="component" value="Plasmid pCD1"/>
</dbReference>
<dbReference type="Proteomes" id="UP000001019">
    <property type="component" value="Plasmid pCD1"/>
</dbReference>
<dbReference type="GO" id="GO:0004725">
    <property type="term" value="F:protein tyrosine phosphatase activity"/>
    <property type="evidence" value="ECO:0007669"/>
    <property type="project" value="InterPro"/>
</dbReference>
<dbReference type="Gene3D" id="3.30.1570.10">
    <property type="entry name" value="Protein-tyrosine phosphatase, YopH, N-terminal domain"/>
    <property type="match status" value="1"/>
</dbReference>
<dbReference type="InterPro" id="IPR015103">
    <property type="entry name" value="ProtTyrPase_YopH_N"/>
</dbReference>
<dbReference type="InterPro" id="IPR036484">
    <property type="entry name" value="ProtTyrPase_YopH_N_sf"/>
</dbReference>
<dbReference type="NCBIfam" id="NF033924">
    <property type="entry name" value="T3SS_LcrQ_reg"/>
    <property type="match status" value="1"/>
</dbReference>
<dbReference type="Pfam" id="PF09013">
    <property type="entry name" value="YopH_N"/>
    <property type="match status" value="1"/>
</dbReference>
<dbReference type="SUPFAM" id="SSF64449">
    <property type="entry name" value="YopH tyrosine phosphatase N-terminal domain"/>
    <property type="match status" value="1"/>
</dbReference>
<organism>
    <name type="scientific">Yersinia pestis</name>
    <dbReference type="NCBI Taxonomy" id="632"/>
    <lineage>
        <taxon>Bacteria</taxon>
        <taxon>Pseudomonadati</taxon>
        <taxon>Pseudomonadota</taxon>
        <taxon>Gammaproteobacteria</taxon>
        <taxon>Enterobacterales</taxon>
        <taxon>Yersiniaceae</taxon>
        <taxon>Yersinia</taxon>
    </lineage>
</organism>
<keyword id="KW-0614">Plasmid</keyword>
<keyword id="KW-1185">Reference proteome</keyword>
<keyword id="KW-0843">Virulence</keyword>
<name>YSCM_YERPE</name>
<gene>
    <name type="primary">yscM</name>
    <name type="synonym">lcrQ</name>
    <name type="ordered locus">YPCD1.62</name>
    <name type="ordered locus">y5016</name>
    <name type="ordered locus">y0019</name>
    <name type="ordered locus">YP_pCD21</name>
</gene>
<reference key="1">
    <citation type="journal article" date="1998" name="Infect. Immun.">
        <title>DNA sequencing and analysis of the low-Ca2+-response plasmid pCD1 of Yersinia pestis KIM5.</title>
        <authorList>
            <person name="Perry R.D."/>
            <person name="Straley S.C."/>
            <person name="Fetherston J.D."/>
            <person name="Rose D.J."/>
            <person name="Gregor J."/>
            <person name="Blattner F.R."/>
        </authorList>
    </citation>
    <scope>NUCLEOTIDE SEQUENCE [GENOMIC DNA]</scope>
    <source>
        <strain>KIM5 / Biovar Mediaevalis</strain>
    </source>
</reference>
<reference key="2">
    <citation type="journal article" date="1998" name="J. Bacteriol.">
        <title>Structural organization of virulence-associated plasmids of Yersinia pestis.</title>
        <authorList>
            <person name="Hu P."/>
            <person name="Elliott J."/>
            <person name="McCready P."/>
            <person name="Skowronski E."/>
            <person name="Garnes J."/>
            <person name="Kobayashi A."/>
            <person name="Brubaker R.R."/>
            <person name="Garcia E."/>
        </authorList>
    </citation>
    <scope>NUCLEOTIDE SEQUENCE [GENOMIC DNA]</scope>
    <source>
        <strain>KIM5 / Biovar Mediaevalis</strain>
    </source>
</reference>
<reference key="3">
    <citation type="journal article" date="2001" name="Nature">
        <title>Genome sequence of Yersinia pestis, the causative agent of plague.</title>
        <authorList>
            <person name="Parkhill J."/>
            <person name="Wren B.W."/>
            <person name="Thomson N.R."/>
            <person name="Titball R.W."/>
            <person name="Holden M.T.G."/>
            <person name="Prentice M.B."/>
            <person name="Sebaihia M."/>
            <person name="James K.D."/>
            <person name="Churcher C.M."/>
            <person name="Mungall K.L."/>
            <person name="Baker S."/>
            <person name="Basham D."/>
            <person name="Bentley S.D."/>
            <person name="Brooks K."/>
            <person name="Cerdeno-Tarraga A.-M."/>
            <person name="Chillingworth T."/>
            <person name="Cronin A."/>
            <person name="Davies R.M."/>
            <person name="Davis P."/>
            <person name="Dougan G."/>
            <person name="Feltwell T."/>
            <person name="Hamlin N."/>
            <person name="Holroyd S."/>
            <person name="Jagels K."/>
            <person name="Karlyshev A.V."/>
            <person name="Leather S."/>
            <person name="Moule S."/>
            <person name="Oyston P.C.F."/>
            <person name="Quail M.A."/>
            <person name="Rutherford K.M."/>
            <person name="Simmonds M."/>
            <person name="Skelton J."/>
            <person name="Stevens K."/>
            <person name="Whitehead S."/>
            <person name="Barrell B.G."/>
        </authorList>
    </citation>
    <scope>NUCLEOTIDE SEQUENCE [LARGE SCALE GENOMIC DNA]</scope>
    <source>
        <strain>CO-92 / Biovar Orientalis</strain>
    </source>
</reference>
<reference key="4">
    <citation type="journal article" date="2004" name="DNA Res.">
        <title>Complete genome sequence of Yersinia pestis strain 91001, an isolate avirulent to humans.</title>
        <authorList>
            <person name="Song Y."/>
            <person name="Tong Z."/>
            <person name="Wang J."/>
            <person name="Wang L."/>
            <person name="Guo Z."/>
            <person name="Han Y."/>
            <person name="Zhang J."/>
            <person name="Pei D."/>
            <person name="Zhou D."/>
            <person name="Qin H."/>
            <person name="Pang X."/>
            <person name="Han Y."/>
            <person name="Zhai J."/>
            <person name="Li M."/>
            <person name="Cui B."/>
            <person name="Qi Z."/>
            <person name="Jin L."/>
            <person name="Dai R."/>
            <person name="Chen F."/>
            <person name="Li S."/>
            <person name="Ye C."/>
            <person name="Du Z."/>
            <person name="Lin W."/>
            <person name="Wang J."/>
            <person name="Yu J."/>
            <person name="Yang H."/>
            <person name="Wang J."/>
            <person name="Huang P."/>
            <person name="Yang R."/>
        </authorList>
    </citation>
    <scope>NUCLEOTIDE SEQUENCE [LARGE SCALE GENOMIC DNA]</scope>
    <source>
        <strain>91001 / Biovar Mediaevalis</strain>
    </source>
</reference>
<evidence type="ECO:0000250" key="1"/>
<evidence type="ECO:0000256" key="2">
    <source>
        <dbReference type="SAM" id="MobiDB-lite"/>
    </source>
</evidence>
<proteinExistence type="inferred from homology"/>
<comment type="function">
    <text evidence="1">Belongs to an operon involved in the translocation of Yop proteins across the bacterial membranes or in the specific control of this function.</text>
</comment>
<protein>
    <recommendedName>
        <fullName>Yop proteins translocation protein M</fullName>
    </recommendedName>
    <alternativeName>
        <fullName>Low calcium response locus protein Q</fullName>
    </alternativeName>
</protein>